<accession>Q6FZD9</accession>
<name>RS5_BARQU</name>
<sequence>MAQKERGERDERDGEFVDRLVHINRVAKVVKGGRRFGFAALVVVGDQKGRVGFGHGKAREVPEAVRKATEAAKRGMIYVPLRSGRTLHHDLEGRHGAGRVLLRSASAGTGIIAGGPMRAIFETLGMQDVVAKSLGSSNPYNMVRATFDALKHQMHPRDIAVQRGIKYSILQARRQHLVDAEG</sequence>
<comment type="function">
    <text evidence="1">With S4 and S12 plays an important role in translational accuracy.</text>
</comment>
<comment type="function">
    <text evidence="1">Located at the back of the 30S subunit body where it stabilizes the conformation of the head with respect to the body.</text>
</comment>
<comment type="subunit">
    <text evidence="1">Part of the 30S ribosomal subunit. Contacts proteins S4 and S8.</text>
</comment>
<comment type="domain">
    <text>The N-terminal domain interacts with the head of the 30S subunit; the C-terminal domain interacts with the body and contacts protein S4. The interaction surface between S4 and S5 is involved in control of translational fidelity.</text>
</comment>
<comment type="similarity">
    <text evidence="1">Belongs to the universal ribosomal protein uS5 family.</text>
</comment>
<evidence type="ECO:0000255" key="1">
    <source>
        <dbReference type="HAMAP-Rule" id="MF_01307"/>
    </source>
</evidence>
<evidence type="ECO:0000305" key="2"/>
<keyword id="KW-0687">Ribonucleoprotein</keyword>
<keyword id="KW-0689">Ribosomal protein</keyword>
<keyword id="KW-0694">RNA-binding</keyword>
<keyword id="KW-0699">rRNA-binding</keyword>
<organism>
    <name type="scientific">Bartonella quintana (strain Toulouse)</name>
    <name type="common">Rochalimaea quintana</name>
    <dbReference type="NCBI Taxonomy" id="283165"/>
    <lineage>
        <taxon>Bacteria</taxon>
        <taxon>Pseudomonadati</taxon>
        <taxon>Pseudomonadota</taxon>
        <taxon>Alphaproteobacteria</taxon>
        <taxon>Hyphomicrobiales</taxon>
        <taxon>Bartonellaceae</taxon>
        <taxon>Bartonella</taxon>
    </lineage>
</organism>
<reference key="1">
    <citation type="journal article" date="2004" name="Proc. Natl. Acad. Sci. U.S.A.">
        <title>The louse-borne human pathogen Bartonella quintana is a genomic derivative of the zoonotic agent Bartonella henselae.</title>
        <authorList>
            <person name="Alsmark U.C.M."/>
            <person name="Frank A.C."/>
            <person name="Karlberg E.O."/>
            <person name="Legault B.-A."/>
            <person name="Ardell D.H."/>
            <person name="Canbaeck B."/>
            <person name="Eriksson A.-S."/>
            <person name="Naeslund A.K."/>
            <person name="Handley S.A."/>
            <person name="Huvet M."/>
            <person name="La Scola B."/>
            <person name="Holmberg M."/>
            <person name="Andersson S.G.E."/>
        </authorList>
    </citation>
    <scope>NUCLEOTIDE SEQUENCE [LARGE SCALE GENOMIC DNA]</scope>
    <source>
        <strain>Toulouse</strain>
    </source>
</reference>
<feature type="chain" id="PRO_0000131473" description="Small ribosomal subunit protein uS5">
    <location>
        <begin position="1"/>
        <end position="182"/>
    </location>
</feature>
<feature type="domain" description="S5 DRBM" evidence="1">
    <location>
        <begin position="16"/>
        <end position="79"/>
    </location>
</feature>
<proteinExistence type="inferred from homology"/>
<dbReference type="EMBL" id="BX897700">
    <property type="protein sequence ID" value="CAF26289.1"/>
    <property type="molecule type" value="Genomic_DNA"/>
</dbReference>
<dbReference type="RefSeq" id="WP_011179536.1">
    <property type="nucleotide sequence ID" value="NC_005955.1"/>
</dbReference>
<dbReference type="SMR" id="Q6FZD9"/>
<dbReference type="KEGG" id="bqu:BQ08060"/>
<dbReference type="eggNOG" id="COG0098">
    <property type="taxonomic scope" value="Bacteria"/>
</dbReference>
<dbReference type="HOGENOM" id="CLU_065898_2_2_5"/>
<dbReference type="OrthoDB" id="9809045at2"/>
<dbReference type="Proteomes" id="UP000000597">
    <property type="component" value="Chromosome"/>
</dbReference>
<dbReference type="GO" id="GO:0015935">
    <property type="term" value="C:small ribosomal subunit"/>
    <property type="evidence" value="ECO:0007669"/>
    <property type="project" value="InterPro"/>
</dbReference>
<dbReference type="GO" id="GO:0019843">
    <property type="term" value="F:rRNA binding"/>
    <property type="evidence" value="ECO:0007669"/>
    <property type="project" value="UniProtKB-UniRule"/>
</dbReference>
<dbReference type="GO" id="GO:0003735">
    <property type="term" value="F:structural constituent of ribosome"/>
    <property type="evidence" value="ECO:0007669"/>
    <property type="project" value="InterPro"/>
</dbReference>
<dbReference type="GO" id="GO:0006412">
    <property type="term" value="P:translation"/>
    <property type="evidence" value="ECO:0007669"/>
    <property type="project" value="UniProtKB-UniRule"/>
</dbReference>
<dbReference type="FunFam" id="3.30.160.20:FF:000001">
    <property type="entry name" value="30S ribosomal protein S5"/>
    <property type="match status" value="1"/>
</dbReference>
<dbReference type="FunFam" id="3.30.230.10:FF:000002">
    <property type="entry name" value="30S ribosomal protein S5"/>
    <property type="match status" value="1"/>
</dbReference>
<dbReference type="Gene3D" id="3.30.160.20">
    <property type="match status" value="1"/>
</dbReference>
<dbReference type="Gene3D" id="3.30.230.10">
    <property type="match status" value="1"/>
</dbReference>
<dbReference type="HAMAP" id="MF_01307_B">
    <property type="entry name" value="Ribosomal_uS5_B"/>
    <property type="match status" value="1"/>
</dbReference>
<dbReference type="InterPro" id="IPR020568">
    <property type="entry name" value="Ribosomal_Su5_D2-typ_SF"/>
</dbReference>
<dbReference type="InterPro" id="IPR000851">
    <property type="entry name" value="Ribosomal_uS5"/>
</dbReference>
<dbReference type="InterPro" id="IPR005712">
    <property type="entry name" value="Ribosomal_uS5_bac-type"/>
</dbReference>
<dbReference type="InterPro" id="IPR005324">
    <property type="entry name" value="Ribosomal_uS5_C"/>
</dbReference>
<dbReference type="InterPro" id="IPR013810">
    <property type="entry name" value="Ribosomal_uS5_N"/>
</dbReference>
<dbReference type="InterPro" id="IPR018192">
    <property type="entry name" value="Ribosomal_uS5_N_CS"/>
</dbReference>
<dbReference type="InterPro" id="IPR014721">
    <property type="entry name" value="Ribsml_uS5_D2-typ_fold_subgr"/>
</dbReference>
<dbReference type="NCBIfam" id="TIGR01021">
    <property type="entry name" value="rpsE_bact"/>
    <property type="match status" value="1"/>
</dbReference>
<dbReference type="PANTHER" id="PTHR48277">
    <property type="entry name" value="MITOCHONDRIAL RIBOSOMAL PROTEIN S5"/>
    <property type="match status" value="1"/>
</dbReference>
<dbReference type="PANTHER" id="PTHR48277:SF1">
    <property type="entry name" value="MITOCHONDRIAL RIBOSOMAL PROTEIN S5"/>
    <property type="match status" value="1"/>
</dbReference>
<dbReference type="Pfam" id="PF00333">
    <property type="entry name" value="Ribosomal_S5"/>
    <property type="match status" value="1"/>
</dbReference>
<dbReference type="Pfam" id="PF03719">
    <property type="entry name" value="Ribosomal_S5_C"/>
    <property type="match status" value="1"/>
</dbReference>
<dbReference type="SUPFAM" id="SSF54768">
    <property type="entry name" value="dsRNA-binding domain-like"/>
    <property type="match status" value="1"/>
</dbReference>
<dbReference type="SUPFAM" id="SSF54211">
    <property type="entry name" value="Ribosomal protein S5 domain 2-like"/>
    <property type="match status" value="1"/>
</dbReference>
<dbReference type="PROSITE" id="PS00585">
    <property type="entry name" value="RIBOSOMAL_S5"/>
    <property type="match status" value="1"/>
</dbReference>
<dbReference type="PROSITE" id="PS50881">
    <property type="entry name" value="S5_DSRBD"/>
    <property type="match status" value="1"/>
</dbReference>
<protein>
    <recommendedName>
        <fullName evidence="1">Small ribosomal subunit protein uS5</fullName>
    </recommendedName>
    <alternativeName>
        <fullName evidence="2">30S ribosomal protein S5</fullName>
    </alternativeName>
</protein>
<gene>
    <name evidence="1" type="primary">rpsE</name>
    <name type="ordered locus">BQ08060</name>
</gene>